<organism>
    <name type="scientific">Mus musculus</name>
    <name type="common">Mouse</name>
    <dbReference type="NCBI Taxonomy" id="10090"/>
    <lineage>
        <taxon>Eukaryota</taxon>
        <taxon>Metazoa</taxon>
        <taxon>Chordata</taxon>
        <taxon>Craniata</taxon>
        <taxon>Vertebrata</taxon>
        <taxon>Euteleostomi</taxon>
        <taxon>Mammalia</taxon>
        <taxon>Eutheria</taxon>
        <taxon>Euarchontoglires</taxon>
        <taxon>Glires</taxon>
        <taxon>Rodentia</taxon>
        <taxon>Myomorpha</taxon>
        <taxon>Muroidea</taxon>
        <taxon>Muridae</taxon>
        <taxon>Murinae</taxon>
        <taxon>Mus</taxon>
        <taxon>Mus</taxon>
    </lineage>
</organism>
<feature type="signal peptide" evidence="2">
    <location>
        <begin position="1"/>
        <end position="18"/>
    </location>
</feature>
<feature type="chain" id="PRO_0000017169" description="BPI fold-containing family B member 6">
    <location>
        <begin position="19"/>
        <end position="449"/>
    </location>
</feature>
<feature type="glycosylation site" description="N-linked (GlcNAc...) asparagine" evidence="2">
    <location>
        <position position="115"/>
    </location>
</feature>
<feature type="disulfide bond" evidence="1">
    <location>
        <begin position="138"/>
        <end position="172"/>
    </location>
</feature>
<feature type="sequence conflict" description="In Ref. 2; AAH48083." evidence="3" ref="2">
    <original>SS</original>
    <variation>FF</variation>
    <location>
        <begin position="385"/>
        <end position="386"/>
    </location>
</feature>
<dbReference type="EMBL" id="AL833803">
    <property type="status" value="NOT_ANNOTATED_CDS"/>
    <property type="molecule type" value="Genomic_DNA"/>
</dbReference>
<dbReference type="EMBL" id="BC048083">
    <property type="protein sequence ID" value="AAH48083.1"/>
    <property type="molecule type" value="mRNA"/>
</dbReference>
<dbReference type="EMBL" id="AK087711">
    <property type="protein sequence ID" value="BAC39978.1"/>
    <property type="status" value="ALT_INIT"/>
    <property type="molecule type" value="mRNA"/>
</dbReference>
<dbReference type="CCDS" id="CCDS16920.1"/>
<dbReference type="RefSeq" id="NP_955007.2">
    <property type="nucleotide sequence ID" value="NM_199303.2"/>
</dbReference>
<dbReference type="RefSeq" id="XP_017173296.1">
    <property type="nucleotide sequence ID" value="XM_017317807.1"/>
</dbReference>
<dbReference type="SMR" id="Q8BU51"/>
<dbReference type="FunCoup" id="Q8BU51">
    <property type="interactions" value="9"/>
</dbReference>
<dbReference type="STRING" id="10090.ENSMUSP00000086347"/>
<dbReference type="GlyCosmos" id="Q8BU51">
    <property type="glycosylation" value="1 site, No reported glycans"/>
</dbReference>
<dbReference type="GlyGen" id="Q8BU51">
    <property type="glycosylation" value="1 site"/>
</dbReference>
<dbReference type="iPTMnet" id="Q8BU51"/>
<dbReference type="PhosphoSitePlus" id="Q8BU51"/>
<dbReference type="PaxDb" id="10090-ENSMUSP00000086347"/>
<dbReference type="ProteomicsDB" id="265456"/>
<dbReference type="Antibodypedia" id="25493">
    <property type="antibodies" value="64 antibodies from 13 providers"/>
</dbReference>
<dbReference type="DNASU" id="228796"/>
<dbReference type="Ensembl" id="ENSMUST00000088955.12">
    <property type="protein sequence ID" value="ENSMUSP00000086347.6"/>
    <property type="gene ID" value="ENSMUSG00000068009.12"/>
</dbReference>
<dbReference type="GeneID" id="228796"/>
<dbReference type="KEGG" id="mmu:228796"/>
<dbReference type="UCSC" id="uc008nio.2">
    <property type="organism name" value="mouse"/>
</dbReference>
<dbReference type="AGR" id="MGI:2684965"/>
<dbReference type="CTD" id="128859"/>
<dbReference type="MGI" id="MGI:2684965">
    <property type="gene designation" value="Bpifb6"/>
</dbReference>
<dbReference type="VEuPathDB" id="HostDB:ENSMUSG00000068009"/>
<dbReference type="eggNOG" id="KOG4160">
    <property type="taxonomic scope" value="Eukaryota"/>
</dbReference>
<dbReference type="GeneTree" id="ENSGT01100000263546"/>
<dbReference type="HOGENOM" id="CLU_031635_1_0_1"/>
<dbReference type="InParanoid" id="Q8BU51"/>
<dbReference type="OMA" id="FNLKVQY"/>
<dbReference type="OrthoDB" id="9623596at2759"/>
<dbReference type="PhylomeDB" id="Q8BU51"/>
<dbReference type="TreeFam" id="TF315617"/>
<dbReference type="Reactome" id="R-MMU-6803157">
    <property type="pathway name" value="Antimicrobial peptides"/>
</dbReference>
<dbReference type="BioGRID-ORCS" id="228796">
    <property type="hits" value="1 hit in 78 CRISPR screens"/>
</dbReference>
<dbReference type="PRO" id="PR:Q8BU51"/>
<dbReference type="Proteomes" id="UP000000589">
    <property type="component" value="Chromosome 2"/>
</dbReference>
<dbReference type="RNAct" id="Q8BU51">
    <property type="molecule type" value="protein"/>
</dbReference>
<dbReference type="Bgee" id="ENSMUSG00000068009">
    <property type="expression patterns" value="Expressed in ovary and 6 other cell types or tissues"/>
</dbReference>
<dbReference type="ExpressionAtlas" id="Q8BU51">
    <property type="expression patterns" value="baseline and differential"/>
</dbReference>
<dbReference type="GO" id="GO:0005576">
    <property type="term" value="C:extracellular region"/>
    <property type="evidence" value="ECO:0007669"/>
    <property type="project" value="UniProtKB-SubCell"/>
</dbReference>
<dbReference type="GO" id="GO:0008289">
    <property type="term" value="F:lipid binding"/>
    <property type="evidence" value="ECO:0007669"/>
    <property type="project" value="InterPro"/>
</dbReference>
<dbReference type="CDD" id="cd00025">
    <property type="entry name" value="BPI1"/>
    <property type="match status" value="1"/>
</dbReference>
<dbReference type="Gene3D" id="3.15.10.10">
    <property type="entry name" value="Bactericidal permeability-increasing protein, domain 1"/>
    <property type="match status" value="1"/>
</dbReference>
<dbReference type="Gene3D" id="3.15.20.10">
    <property type="entry name" value="Bactericidal permeability-increasing protein, domain 2"/>
    <property type="match status" value="1"/>
</dbReference>
<dbReference type="InterPro" id="IPR017943">
    <property type="entry name" value="Bactericidal_perm-incr_a/b_dom"/>
</dbReference>
<dbReference type="InterPro" id="IPR051660">
    <property type="entry name" value="BPI_fold-BPI/LBP"/>
</dbReference>
<dbReference type="InterPro" id="IPR001124">
    <property type="entry name" value="Lipid-bd_serum_glycop_C"/>
</dbReference>
<dbReference type="InterPro" id="IPR017942">
    <property type="entry name" value="Lipid-bd_serum_glycop_N"/>
</dbReference>
<dbReference type="PANTHER" id="PTHR46019">
    <property type="entry name" value="BPI FOLD-CONTAINING FAMILY B MEMBER 4-RELATED"/>
    <property type="match status" value="1"/>
</dbReference>
<dbReference type="PANTHER" id="PTHR46019:SF2">
    <property type="entry name" value="BPI FOLD-CONTAINING FAMILY B MEMBER 6"/>
    <property type="match status" value="1"/>
</dbReference>
<dbReference type="Pfam" id="PF01273">
    <property type="entry name" value="LBP_BPI_CETP"/>
    <property type="match status" value="1"/>
</dbReference>
<dbReference type="Pfam" id="PF02886">
    <property type="entry name" value="LBP_BPI_CETP_C"/>
    <property type="match status" value="1"/>
</dbReference>
<dbReference type="SMART" id="SM00329">
    <property type="entry name" value="BPI2"/>
    <property type="match status" value="1"/>
</dbReference>
<dbReference type="SUPFAM" id="SSF55394">
    <property type="entry name" value="Bactericidal permeability-increasing protein, BPI"/>
    <property type="match status" value="2"/>
</dbReference>
<keyword id="KW-1015">Disulfide bond</keyword>
<keyword id="KW-0325">Glycoprotein</keyword>
<keyword id="KW-1185">Reference proteome</keyword>
<keyword id="KW-0964">Secreted</keyword>
<keyword id="KW-0732">Signal</keyword>
<protein>
    <recommendedName>
        <fullName>BPI fold-containing family B member 6</fullName>
    </recommendedName>
    <alternativeName>
        <fullName>Bactericidal/permeability-increasing protein-like 3</fullName>
    </alternativeName>
</protein>
<comment type="subcellular location">
    <subcellularLocation>
        <location evidence="1">Secreted</location>
    </subcellularLocation>
</comment>
<comment type="similarity">
    <text evidence="3">Belongs to the BPI/LBP/Plunc superfamily. BPI/LBP family.</text>
</comment>
<comment type="sequence caution" evidence="3">
    <conflict type="erroneous initiation">
        <sequence resource="EMBL-CDS" id="BAC39978"/>
    </conflict>
    <text>Truncated N-terminus.</text>
</comment>
<reference key="1">
    <citation type="journal article" date="2009" name="PLoS Biol.">
        <title>Lineage-specific biology revealed by a finished genome assembly of the mouse.</title>
        <authorList>
            <person name="Church D.M."/>
            <person name="Goodstadt L."/>
            <person name="Hillier L.W."/>
            <person name="Zody M.C."/>
            <person name="Goldstein S."/>
            <person name="She X."/>
            <person name="Bult C.J."/>
            <person name="Agarwala R."/>
            <person name="Cherry J.L."/>
            <person name="DiCuccio M."/>
            <person name="Hlavina W."/>
            <person name="Kapustin Y."/>
            <person name="Meric P."/>
            <person name="Maglott D."/>
            <person name="Birtle Z."/>
            <person name="Marques A.C."/>
            <person name="Graves T."/>
            <person name="Zhou S."/>
            <person name="Teague B."/>
            <person name="Potamousis K."/>
            <person name="Churas C."/>
            <person name="Place M."/>
            <person name="Herschleb J."/>
            <person name="Runnheim R."/>
            <person name="Forrest D."/>
            <person name="Amos-Landgraf J."/>
            <person name="Schwartz D.C."/>
            <person name="Cheng Z."/>
            <person name="Lindblad-Toh K."/>
            <person name="Eichler E.E."/>
            <person name="Ponting C.P."/>
        </authorList>
    </citation>
    <scope>NUCLEOTIDE SEQUENCE [LARGE SCALE GENOMIC DNA]</scope>
    <source>
        <strain>C57BL/6J</strain>
    </source>
</reference>
<reference key="2">
    <citation type="journal article" date="2004" name="Genome Res.">
        <title>The status, quality, and expansion of the NIH full-length cDNA project: the Mammalian Gene Collection (MGC).</title>
        <authorList>
            <consortium name="The MGC Project Team"/>
        </authorList>
    </citation>
    <scope>NUCLEOTIDE SEQUENCE [LARGE SCALE MRNA]</scope>
    <source>
        <tissue>Olfactory epithelium</tissue>
    </source>
</reference>
<reference key="3">
    <citation type="journal article" date="2005" name="Science">
        <title>The transcriptional landscape of the mammalian genome.</title>
        <authorList>
            <person name="Carninci P."/>
            <person name="Kasukawa T."/>
            <person name="Katayama S."/>
            <person name="Gough J."/>
            <person name="Frith M.C."/>
            <person name="Maeda N."/>
            <person name="Oyama R."/>
            <person name="Ravasi T."/>
            <person name="Lenhard B."/>
            <person name="Wells C."/>
            <person name="Kodzius R."/>
            <person name="Shimokawa K."/>
            <person name="Bajic V.B."/>
            <person name="Brenner S.E."/>
            <person name="Batalov S."/>
            <person name="Forrest A.R."/>
            <person name="Zavolan M."/>
            <person name="Davis M.J."/>
            <person name="Wilming L.G."/>
            <person name="Aidinis V."/>
            <person name="Allen J.E."/>
            <person name="Ambesi-Impiombato A."/>
            <person name="Apweiler R."/>
            <person name="Aturaliya R.N."/>
            <person name="Bailey T.L."/>
            <person name="Bansal M."/>
            <person name="Baxter L."/>
            <person name="Beisel K.W."/>
            <person name="Bersano T."/>
            <person name="Bono H."/>
            <person name="Chalk A.M."/>
            <person name="Chiu K.P."/>
            <person name="Choudhary V."/>
            <person name="Christoffels A."/>
            <person name="Clutterbuck D.R."/>
            <person name="Crowe M.L."/>
            <person name="Dalla E."/>
            <person name="Dalrymple B.P."/>
            <person name="de Bono B."/>
            <person name="Della Gatta G."/>
            <person name="di Bernardo D."/>
            <person name="Down T."/>
            <person name="Engstrom P."/>
            <person name="Fagiolini M."/>
            <person name="Faulkner G."/>
            <person name="Fletcher C.F."/>
            <person name="Fukushima T."/>
            <person name="Furuno M."/>
            <person name="Futaki S."/>
            <person name="Gariboldi M."/>
            <person name="Georgii-Hemming P."/>
            <person name="Gingeras T.R."/>
            <person name="Gojobori T."/>
            <person name="Green R.E."/>
            <person name="Gustincich S."/>
            <person name="Harbers M."/>
            <person name="Hayashi Y."/>
            <person name="Hensch T.K."/>
            <person name="Hirokawa N."/>
            <person name="Hill D."/>
            <person name="Huminiecki L."/>
            <person name="Iacono M."/>
            <person name="Ikeo K."/>
            <person name="Iwama A."/>
            <person name="Ishikawa T."/>
            <person name="Jakt M."/>
            <person name="Kanapin A."/>
            <person name="Katoh M."/>
            <person name="Kawasawa Y."/>
            <person name="Kelso J."/>
            <person name="Kitamura H."/>
            <person name="Kitano H."/>
            <person name="Kollias G."/>
            <person name="Krishnan S.P."/>
            <person name="Kruger A."/>
            <person name="Kummerfeld S.K."/>
            <person name="Kurochkin I.V."/>
            <person name="Lareau L.F."/>
            <person name="Lazarevic D."/>
            <person name="Lipovich L."/>
            <person name="Liu J."/>
            <person name="Liuni S."/>
            <person name="McWilliam S."/>
            <person name="Madan Babu M."/>
            <person name="Madera M."/>
            <person name="Marchionni L."/>
            <person name="Matsuda H."/>
            <person name="Matsuzawa S."/>
            <person name="Miki H."/>
            <person name="Mignone F."/>
            <person name="Miyake S."/>
            <person name="Morris K."/>
            <person name="Mottagui-Tabar S."/>
            <person name="Mulder N."/>
            <person name="Nakano N."/>
            <person name="Nakauchi H."/>
            <person name="Ng P."/>
            <person name="Nilsson R."/>
            <person name="Nishiguchi S."/>
            <person name="Nishikawa S."/>
            <person name="Nori F."/>
            <person name="Ohara O."/>
            <person name="Okazaki Y."/>
            <person name="Orlando V."/>
            <person name="Pang K.C."/>
            <person name="Pavan W.J."/>
            <person name="Pavesi G."/>
            <person name="Pesole G."/>
            <person name="Petrovsky N."/>
            <person name="Piazza S."/>
            <person name="Reed J."/>
            <person name="Reid J.F."/>
            <person name="Ring B.Z."/>
            <person name="Ringwald M."/>
            <person name="Rost B."/>
            <person name="Ruan Y."/>
            <person name="Salzberg S.L."/>
            <person name="Sandelin A."/>
            <person name="Schneider C."/>
            <person name="Schoenbach C."/>
            <person name="Sekiguchi K."/>
            <person name="Semple C.A."/>
            <person name="Seno S."/>
            <person name="Sessa L."/>
            <person name="Sheng Y."/>
            <person name="Shibata Y."/>
            <person name="Shimada H."/>
            <person name="Shimada K."/>
            <person name="Silva D."/>
            <person name="Sinclair B."/>
            <person name="Sperling S."/>
            <person name="Stupka E."/>
            <person name="Sugiura K."/>
            <person name="Sultana R."/>
            <person name="Takenaka Y."/>
            <person name="Taki K."/>
            <person name="Tammoja K."/>
            <person name="Tan S.L."/>
            <person name="Tang S."/>
            <person name="Taylor M.S."/>
            <person name="Tegner J."/>
            <person name="Teichmann S.A."/>
            <person name="Ueda H.R."/>
            <person name="van Nimwegen E."/>
            <person name="Verardo R."/>
            <person name="Wei C.L."/>
            <person name="Yagi K."/>
            <person name="Yamanishi H."/>
            <person name="Zabarovsky E."/>
            <person name="Zhu S."/>
            <person name="Zimmer A."/>
            <person name="Hide W."/>
            <person name="Bult C."/>
            <person name="Grimmond S.M."/>
            <person name="Teasdale R.D."/>
            <person name="Liu E.T."/>
            <person name="Brusic V."/>
            <person name="Quackenbush J."/>
            <person name="Wahlestedt C."/>
            <person name="Mattick J.S."/>
            <person name="Hume D.A."/>
            <person name="Kai C."/>
            <person name="Sasaki D."/>
            <person name="Tomaru Y."/>
            <person name="Fukuda S."/>
            <person name="Kanamori-Katayama M."/>
            <person name="Suzuki M."/>
            <person name="Aoki J."/>
            <person name="Arakawa T."/>
            <person name="Iida J."/>
            <person name="Imamura K."/>
            <person name="Itoh M."/>
            <person name="Kato T."/>
            <person name="Kawaji H."/>
            <person name="Kawagashira N."/>
            <person name="Kawashima T."/>
            <person name="Kojima M."/>
            <person name="Kondo S."/>
            <person name="Konno H."/>
            <person name="Nakano K."/>
            <person name="Ninomiya N."/>
            <person name="Nishio T."/>
            <person name="Okada M."/>
            <person name="Plessy C."/>
            <person name="Shibata K."/>
            <person name="Shiraki T."/>
            <person name="Suzuki S."/>
            <person name="Tagami M."/>
            <person name="Waki K."/>
            <person name="Watahiki A."/>
            <person name="Okamura-Oho Y."/>
            <person name="Suzuki H."/>
            <person name="Kawai J."/>
            <person name="Hayashizaki Y."/>
        </authorList>
    </citation>
    <scope>NUCLEOTIDE SEQUENCE [LARGE SCALE MRNA] OF 335-449</scope>
    <source>
        <strain>C57BL/6J</strain>
        <tissue>Ovary</tissue>
    </source>
</reference>
<evidence type="ECO:0000250" key="1"/>
<evidence type="ECO:0000255" key="2"/>
<evidence type="ECO:0000305" key="3"/>
<name>BPIB6_MOUSE</name>
<proteinExistence type="evidence at transcript level"/>
<gene>
    <name type="primary">Bpifb6</name>
    <name type="synonym">Bpil3</name>
    <name type="synonym">Gm119</name>
</gene>
<sequence>MLCSLSLVLCGLLAGTRADPGGLLRLGMDIMNHEVQSAMEESHILEKMAAEASNPQPGGKAIKGLSNMKVKDVLEPVITLNFVPGVGISQCVSTGMTITGKSFTGGNMEINVVLNITATDRLLQDEEAGTPVFRSEGCEVILVSVKTNLPNNKAINKFVDSTLRKVLPGLMCPAIDAVLEYVNKKWAKLTDPMPVDKMGTVKYALTSPPATTASHIQVDFSPVVQLQEGQLIQLATDGSLPEFPEGSAKDSQLLLSATFLTAELALLQKSLEVKLKDKRVGKLPQNTRTLAGFIPQVAKTYHKPKPLLIKVKINKPPKVTMKAGKSLMHLHGSLEMFAARRHGKHPKSLFRLETHIGLEIHYSVQDNRLQMVTSMDSLLSLARESSSVGDFHEAELTGFITDYLQKAYIPVVNDVLHVGLPLPDLLAINYNLAELDIVEDALVLGLKTE</sequence>
<accession>Q8BU51</accession>
<accession>A2APD0</accession>
<accession>Q80ZU8</accession>